<dbReference type="EC" id="1.10.3.-"/>
<dbReference type="EMBL" id="BA000033">
    <property type="protein sequence ID" value="BAB94808.1"/>
    <property type="molecule type" value="Genomic_DNA"/>
</dbReference>
<dbReference type="RefSeq" id="WP_001010762.1">
    <property type="nucleotide sequence ID" value="NC_003923.1"/>
</dbReference>
<dbReference type="SMR" id="Q7A182"/>
<dbReference type="KEGG" id="sam:MW0943"/>
<dbReference type="HOGENOM" id="CLU_011899_7_1_9"/>
<dbReference type="UniPathway" id="UPA00705"/>
<dbReference type="GO" id="GO:0005886">
    <property type="term" value="C:plasma membrane"/>
    <property type="evidence" value="ECO:0007669"/>
    <property type="project" value="UniProtKB-SubCell"/>
</dbReference>
<dbReference type="GO" id="GO:0005507">
    <property type="term" value="F:copper ion binding"/>
    <property type="evidence" value="ECO:0007669"/>
    <property type="project" value="InterPro"/>
</dbReference>
<dbReference type="GO" id="GO:0004129">
    <property type="term" value="F:cytochrome-c oxidase activity"/>
    <property type="evidence" value="ECO:0007669"/>
    <property type="project" value="InterPro"/>
</dbReference>
<dbReference type="GO" id="GO:0020037">
    <property type="term" value="F:heme binding"/>
    <property type="evidence" value="ECO:0007669"/>
    <property type="project" value="InterPro"/>
</dbReference>
<dbReference type="GO" id="GO:0016682">
    <property type="term" value="F:oxidoreductase activity, acting on diphenols and related substances as donors, oxygen as acceptor"/>
    <property type="evidence" value="ECO:0007669"/>
    <property type="project" value="InterPro"/>
</dbReference>
<dbReference type="GO" id="GO:0015990">
    <property type="term" value="P:electron transport coupled proton transport"/>
    <property type="evidence" value="ECO:0007669"/>
    <property type="project" value="TreeGrafter"/>
</dbReference>
<dbReference type="GO" id="GO:0006119">
    <property type="term" value="P:oxidative phosphorylation"/>
    <property type="evidence" value="ECO:0007669"/>
    <property type="project" value="UniProtKB-UniPathway"/>
</dbReference>
<dbReference type="GO" id="GO:0022904">
    <property type="term" value="P:respiratory electron transport chain"/>
    <property type="evidence" value="ECO:0007669"/>
    <property type="project" value="TreeGrafter"/>
</dbReference>
<dbReference type="CDD" id="cd01662">
    <property type="entry name" value="Ubiquinol_Oxidase_I"/>
    <property type="match status" value="1"/>
</dbReference>
<dbReference type="FunFam" id="1.20.210.10:FF:000002">
    <property type="entry name" value="Cytochrome o ubiquinol oxidase, subunit I"/>
    <property type="match status" value="1"/>
</dbReference>
<dbReference type="Gene3D" id="1.20.210.10">
    <property type="entry name" value="Cytochrome c oxidase-like, subunit I domain"/>
    <property type="match status" value="1"/>
</dbReference>
<dbReference type="InterPro" id="IPR023616">
    <property type="entry name" value="Cyt_c_oxase-like_su1_dom"/>
</dbReference>
<dbReference type="InterPro" id="IPR036927">
    <property type="entry name" value="Cyt_c_oxase-like_su1_sf"/>
</dbReference>
<dbReference type="InterPro" id="IPR000883">
    <property type="entry name" value="Cyt_C_Oxase_1"/>
</dbReference>
<dbReference type="InterPro" id="IPR023615">
    <property type="entry name" value="Cyt_c_Oxase_su1_BS"/>
</dbReference>
<dbReference type="InterPro" id="IPR014233">
    <property type="entry name" value="QoxB"/>
</dbReference>
<dbReference type="NCBIfam" id="TIGR02882">
    <property type="entry name" value="QoxB"/>
    <property type="match status" value="1"/>
</dbReference>
<dbReference type="PANTHER" id="PTHR10422:SF35">
    <property type="entry name" value="CYTOCHROME BO(3) UBIQUINOL OXIDASE SUBUNIT 1"/>
    <property type="match status" value="1"/>
</dbReference>
<dbReference type="PANTHER" id="PTHR10422">
    <property type="entry name" value="CYTOCHROME C OXIDASE SUBUNIT 1"/>
    <property type="match status" value="1"/>
</dbReference>
<dbReference type="Pfam" id="PF00115">
    <property type="entry name" value="COX1"/>
    <property type="match status" value="1"/>
</dbReference>
<dbReference type="PRINTS" id="PR01165">
    <property type="entry name" value="CYCOXIDASEI"/>
</dbReference>
<dbReference type="SUPFAM" id="SSF81442">
    <property type="entry name" value="Cytochrome c oxidase subunit I-like"/>
    <property type="match status" value="1"/>
</dbReference>
<dbReference type="PROSITE" id="PS50855">
    <property type="entry name" value="COX1"/>
    <property type="match status" value="1"/>
</dbReference>
<dbReference type="PROSITE" id="PS00077">
    <property type="entry name" value="COX1_CUB"/>
    <property type="match status" value="1"/>
</dbReference>
<comment type="function">
    <text evidence="1">Catalyzes quinol oxidation with the concomitant reduction of oxygen to water.</text>
</comment>
<comment type="catalytic activity">
    <reaction>
        <text>2 a quinol + O2 = 2 a quinone + 2 H2O</text>
        <dbReference type="Rhea" id="RHEA:55376"/>
        <dbReference type="ChEBI" id="CHEBI:15377"/>
        <dbReference type="ChEBI" id="CHEBI:15379"/>
        <dbReference type="ChEBI" id="CHEBI:24646"/>
        <dbReference type="ChEBI" id="CHEBI:132124"/>
    </reaction>
</comment>
<comment type="cofactor">
    <cofactor evidence="1">
        <name>Cu cation</name>
        <dbReference type="ChEBI" id="CHEBI:23378"/>
    </cofactor>
    <text evidence="1">Binds a copper B center.</text>
</comment>
<comment type="cofactor">
    <cofactor evidence="1">
        <name>ferriheme a</name>
        <dbReference type="ChEBI" id="CHEBI:60532"/>
    </cofactor>
</comment>
<comment type="cofactor">
    <text evidence="1">Heme A3.</text>
</comment>
<comment type="pathway">
    <text>Energy metabolism; oxidative phosphorylation.</text>
</comment>
<comment type="subcellular location">
    <subcellularLocation>
        <location evidence="1">Cell membrane</location>
        <topology evidence="1">Multi-pass membrane protein</topology>
    </subcellularLocation>
</comment>
<comment type="similarity">
    <text evidence="3">Belongs to the heme-copper respiratory oxidase family.</text>
</comment>
<name>QOX1_STAAW</name>
<protein>
    <recommendedName>
        <fullName>Probable quinol oxidase subunit 1</fullName>
        <ecNumber>1.10.3.-</ecNumber>
    </recommendedName>
    <alternativeName>
        <fullName>Quinol oxidase polypeptide I</fullName>
    </alternativeName>
</protein>
<accession>Q7A182</accession>
<feature type="chain" id="PRO_0000276746" description="Probable quinol oxidase subunit 1">
    <location>
        <begin position="1"/>
        <end position="662"/>
    </location>
</feature>
<feature type="transmembrane region" description="Helical" evidence="2">
    <location>
        <begin position="14"/>
        <end position="34"/>
    </location>
</feature>
<feature type="transmembrane region" description="Helical" evidence="2">
    <location>
        <begin position="58"/>
        <end position="78"/>
    </location>
</feature>
<feature type="transmembrane region" description="Helical" evidence="2">
    <location>
        <begin position="103"/>
        <end position="123"/>
    </location>
</feature>
<feature type="transmembrane region" description="Helical" evidence="2">
    <location>
        <begin position="140"/>
        <end position="160"/>
    </location>
</feature>
<feature type="transmembrane region" description="Helical" evidence="2">
    <location>
        <begin position="187"/>
        <end position="207"/>
    </location>
</feature>
<feature type="transmembrane region" description="Helical" evidence="2">
    <location>
        <begin position="228"/>
        <end position="248"/>
    </location>
</feature>
<feature type="transmembrane region" description="Helical" evidence="2">
    <location>
        <begin position="273"/>
        <end position="293"/>
    </location>
</feature>
<feature type="transmembrane region" description="Helical" evidence="2">
    <location>
        <begin position="311"/>
        <end position="331"/>
    </location>
</feature>
<feature type="transmembrane region" description="Helical" evidence="2">
    <location>
        <begin position="336"/>
        <end position="356"/>
    </location>
</feature>
<feature type="transmembrane region" description="Helical" evidence="2">
    <location>
        <begin position="376"/>
        <end position="396"/>
    </location>
</feature>
<feature type="transmembrane region" description="Helical" evidence="2">
    <location>
        <begin position="415"/>
        <end position="435"/>
    </location>
</feature>
<feature type="transmembrane region" description="Helical" evidence="2">
    <location>
        <begin position="451"/>
        <end position="471"/>
    </location>
</feature>
<feature type="transmembrane region" description="Helical" evidence="2">
    <location>
        <begin position="493"/>
        <end position="513"/>
    </location>
</feature>
<feature type="transmembrane region" description="Helical" evidence="2">
    <location>
        <begin position="587"/>
        <end position="604"/>
    </location>
</feature>
<feature type="transmembrane region" description="Helical" evidence="2">
    <location>
        <begin position="608"/>
        <end position="627"/>
    </location>
</feature>
<feature type="binding site" description="axial binding residue" evidence="1">
    <location>
        <position position="102"/>
    </location>
    <ligand>
        <name>Fe(II)-heme a</name>
        <dbReference type="ChEBI" id="CHEBI:61715"/>
    </ligand>
    <ligandPart>
        <name>Fe</name>
        <dbReference type="ChEBI" id="CHEBI:18248"/>
    </ligandPart>
</feature>
<feature type="binding site" evidence="1">
    <location>
        <position position="279"/>
    </location>
    <ligand>
        <name>Cu cation</name>
        <dbReference type="ChEBI" id="CHEBI:23378"/>
        <label>B</label>
    </ligand>
</feature>
<feature type="binding site" evidence="1">
    <location>
        <position position="283"/>
    </location>
    <ligand>
        <name>Cu cation</name>
        <dbReference type="ChEBI" id="CHEBI:23378"/>
        <label>B</label>
    </ligand>
</feature>
<feature type="binding site" evidence="1">
    <location>
        <position position="328"/>
    </location>
    <ligand>
        <name>Cu cation</name>
        <dbReference type="ChEBI" id="CHEBI:23378"/>
        <label>B</label>
    </ligand>
</feature>
<feature type="binding site" evidence="1">
    <location>
        <position position="329"/>
    </location>
    <ligand>
        <name>Cu cation</name>
        <dbReference type="ChEBI" id="CHEBI:23378"/>
        <label>B</label>
    </ligand>
</feature>
<feature type="binding site" description="axial binding residue" evidence="1">
    <location>
        <position position="414"/>
    </location>
    <ligand>
        <name>heme a3</name>
        <dbReference type="ChEBI" id="CHEBI:83282"/>
    </ligand>
    <ligandPart>
        <name>Fe</name>
        <dbReference type="ChEBI" id="CHEBI:18248"/>
    </ligandPart>
</feature>
<feature type="binding site" description="axial binding residue" evidence="1">
    <location>
        <position position="416"/>
    </location>
    <ligand>
        <name>Fe(II)-heme a</name>
        <dbReference type="ChEBI" id="CHEBI:61715"/>
    </ligand>
    <ligandPart>
        <name>Fe</name>
        <dbReference type="ChEBI" id="CHEBI:18248"/>
    </ligandPart>
</feature>
<feature type="cross-link" description="1'-histidyl-3'-tyrosine (His-Tyr)" evidence="1">
    <location>
        <begin position="279"/>
        <end position="283"/>
    </location>
</feature>
<evidence type="ECO:0000250" key="1"/>
<evidence type="ECO:0000255" key="2"/>
<evidence type="ECO:0000305" key="3"/>
<keyword id="KW-1003">Cell membrane</keyword>
<keyword id="KW-0186">Copper</keyword>
<keyword id="KW-0249">Electron transport</keyword>
<keyword id="KW-0349">Heme</keyword>
<keyword id="KW-0375">Hydrogen ion transport</keyword>
<keyword id="KW-0406">Ion transport</keyword>
<keyword id="KW-0408">Iron</keyword>
<keyword id="KW-0472">Membrane</keyword>
<keyword id="KW-0479">Metal-binding</keyword>
<keyword id="KW-0560">Oxidoreductase</keyword>
<keyword id="KW-0679">Respiratory chain</keyword>
<keyword id="KW-0812">Transmembrane</keyword>
<keyword id="KW-1133">Transmembrane helix</keyword>
<keyword id="KW-0813">Transport</keyword>
<reference key="1">
    <citation type="journal article" date="2002" name="Lancet">
        <title>Genome and virulence determinants of high virulence community-acquired MRSA.</title>
        <authorList>
            <person name="Baba T."/>
            <person name="Takeuchi F."/>
            <person name="Kuroda M."/>
            <person name="Yuzawa H."/>
            <person name="Aoki K."/>
            <person name="Oguchi A."/>
            <person name="Nagai Y."/>
            <person name="Iwama N."/>
            <person name="Asano K."/>
            <person name="Naimi T."/>
            <person name="Kuroda H."/>
            <person name="Cui L."/>
            <person name="Yamamoto K."/>
            <person name="Hiramatsu K."/>
        </authorList>
    </citation>
    <scope>NUCLEOTIDE SEQUENCE [LARGE SCALE GENOMIC DNA]</scope>
    <source>
        <strain>MW2</strain>
    </source>
</reference>
<proteinExistence type="inferred from homology"/>
<organism>
    <name type="scientific">Staphylococcus aureus (strain MW2)</name>
    <dbReference type="NCBI Taxonomy" id="196620"/>
    <lineage>
        <taxon>Bacteria</taxon>
        <taxon>Bacillati</taxon>
        <taxon>Bacillota</taxon>
        <taxon>Bacilli</taxon>
        <taxon>Bacillales</taxon>
        <taxon>Staphylococcaceae</taxon>
        <taxon>Staphylococcus</taxon>
    </lineage>
</organism>
<gene>
    <name type="primary">qoxB</name>
    <name type="ordered locus">MW0943</name>
</gene>
<sequence>MNFPWDQLLVKGNWMITMAQIGAPFLVIGLIAVITYFKLWKYLYKEWFTSVDHKKIGIMYLICAVLMFVRGGIDALLIRAQLTVPDNKFLESNHYNEIFSTHGVIMIIFMAMPFIFGLWNIVVPLQIGARDVAFPVLNNVSFWLFFAGMILFNLSFIIGGSPAAGWTNYAPLAGEFSPGPGVNYYLIAIQISGLGTLATGINFFVTILRCKTPTMKFMQMPMFTVTTFITTLIVILAFPPLTVALALMTTDRIFDTAFFTVAHGGMPMLWANFFWVWGHPEVYIVILPAFGIYSEIIPTFARKRLFGHQSMVWATAGIAFLSFLVWVHHFFTMGNGALINSFFSISTMLIGIPTGVKLFNWLLTLYKGRITFESPMLFSLAFIPNFLLGGVTGVMLAMASADYQYHNTYFLVAHFHYTLVTGVVFACLAGLIFWYPKMMGYKLNETLNKWCFWFFMIGFNVCFLPQFILGLDGMPRRLYTYMPSDGWFLLNLISTIGALLMAIGFLFLVVSIVYSHFKSPREATGDNWDGLGRTLEWTTASAIPPKYNFAITPDWNDYDTFVDMKEHGRHYLDNHNYKDIHMPNNTPVGFWIGIFMTIGGFFLIFETVIPALICLFGIFGTMIYRSFQIDHGYHIPAAEVAETEARLREARIKEREAVSHES</sequence>